<comment type="function">
    <text evidence="1">Catalyzes the formation of acetyl phosphate from acetate and ATP. Can also catalyze the reverse reaction.</text>
</comment>
<comment type="catalytic activity">
    <reaction evidence="1">
        <text>acetate + ATP = acetyl phosphate + ADP</text>
        <dbReference type="Rhea" id="RHEA:11352"/>
        <dbReference type="ChEBI" id="CHEBI:22191"/>
        <dbReference type="ChEBI" id="CHEBI:30089"/>
        <dbReference type="ChEBI" id="CHEBI:30616"/>
        <dbReference type="ChEBI" id="CHEBI:456216"/>
        <dbReference type="EC" id="2.7.2.1"/>
    </reaction>
</comment>
<comment type="cofactor">
    <cofactor evidence="1">
        <name>Mg(2+)</name>
        <dbReference type="ChEBI" id="CHEBI:18420"/>
    </cofactor>
    <cofactor evidence="1">
        <name>Mn(2+)</name>
        <dbReference type="ChEBI" id="CHEBI:29035"/>
    </cofactor>
    <text evidence="1">Mg(2+). Can also accept Mn(2+).</text>
</comment>
<comment type="pathway">
    <text evidence="1">Metabolic intermediate biosynthesis; acetyl-CoA biosynthesis; acetyl-CoA from acetate: step 1/2.</text>
</comment>
<comment type="subunit">
    <text evidence="1">Homodimer.</text>
</comment>
<comment type="subcellular location">
    <subcellularLocation>
        <location evidence="1">Cytoplasm</location>
    </subcellularLocation>
</comment>
<comment type="similarity">
    <text evidence="1">Belongs to the acetokinase family.</text>
</comment>
<keyword id="KW-0067">ATP-binding</keyword>
<keyword id="KW-0963">Cytoplasm</keyword>
<keyword id="KW-0418">Kinase</keyword>
<keyword id="KW-0460">Magnesium</keyword>
<keyword id="KW-0479">Metal-binding</keyword>
<keyword id="KW-0547">Nucleotide-binding</keyword>
<keyword id="KW-1185">Reference proteome</keyword>
<keyword id="KW-0808">Transferase</keyword>
<name>ACKA_STRGC</name>
<reference key="1">
    <citation type="journal article" date="2007" name="J. Bacteriol.">
        <title>Genome-wide transcriptional changes in Streptococcus gordonii in response to competence signaling peptide.</title>
        <authorList>
            <person name="Vickerman M.M."/>
            <person name="Iobst S."/>
            <person name="Jesionowski A.M."/>
            <person name="Gill S.R."/>
        </authorList>
    </citation>
    <scope>NUCLEOTIDE SEQUENCE [LARGE SCALE GENOMIC DNA]</scope>
    <source>
        <strain>Challis / ATCC 35105 / BCRC 15272 / CH1 / DL1 / V288</strain>
    </source>
</reference>
<gene>
    <name evidence="1" type="primary">ackA</name>
    <name type="ordered locus">SGO_1916</name>
</gene>
<protein>
    <recommendedName>
        <fullName evidence="1">Acetate kinase</fullName>
        <ecNumber evidence="1">2.7.2.1</ecNumber>
    </recommendedName>
    <alternativeName>
        <fullName evidence="1">Acetokinase</fullName>
    </alternativeName>
</protein>
<feature type="chain" id="PRO_1000074195" description="Acetate kinase">
    <location>
        <begin position="1"/>
        <end position="396"/>
    </location>
</feature>
<feature type="active site" description="Proton donor/acceptor" evidence="1">
    <location>
        <position position="146"/>
    </location>
</feature>
<feature type="binding site" evidence="1">
    <location>
        <position position="8"/>
    </location>
    <ligand>
        <name>Mg(2+)</name>
        <dbReference type="ChEBI" id="CHEBI:18420"/>
    </ligand>
</feature>
<feature type="binding site" evidence="1">
    <location>
        <position position="15"/>
    </location>
    <ligand>
        <name>ATP</name>
        <dbReference type="ChEBI" id="CHEBI:30616"/>
    </ligand>
</feature>
<feature type="binding site" evidence="1">
    <location>
        <position position="89"/>
    </location>
    <ligand>
        <name>substrate</name>
    </ligand>
</feature>
<feature type="binding site" evidence="1">
    <location>
        <begin position="206"/>
        <end position="210"/>
    </location>
    <ligand>
        <name>ATP</name>
        <dbReference type="ChEBI" id="CHEBI:30616"/>
    </ligand>
</feature>
<feature type="binding site" evidence="1">
    <location>
        <begin position="283"/>
        <end position="285"/>
    </location>
    <ligand>
        <name>ATP</name>
        <dbReference type="ChEBI" id="CHEBI:30616"/>
    </ligand>
</feature>
<feature type="binding site" evidence="1">
    <location>
        <begin position="331"/>
        <end position="335"/>
    </location>
    <ligand>
        <name>ATP</name>
        <dbReference type="ChEBI" id="CHEBI:30616"/>
    </ligand>
</feature>
<feature type="binding site" evidence="1">
    <location>
        <position position="383"/>
    </location>
    <ligand>
        <name>Mg(2+)</name>
        <dbReference type="ChEBI" id="CHEBI:18420"/>
    </ligand>
</feature>
<feature type="site" description="Transition state stabilizer" evidence="1">
    <location>
        <position position="178"/>
    </location>
</feature>
<feature type="site" description="Transition state stabilizer" evidence="1">
    <location>
        <position position="239"/>
    </location>
</feature>
<evidence type="ECO:0000255" key="1">
    <source>
        <dbReference type="HAMAP-Rule" id="MF_00020"/>
    </source>
</evidence>
<proteinExistence type="inferred from homology"/>
<sequence>MSKTIAINAGSSSLKWQLYLMPEEKVLAKGLIERIGLKDSISTVKFDGRTEKQVLDITDHTQAVKILLDDLMRFNIIASFDEITGVGHRVVAGGEYFKDSALVDEEVIQKVEELSLLAPLHNPANAAGIRAFKELLPDITSVVVFDTSFHTTMPEKAYRYPLPTKYYKENKVRKYGAHGTSHEYVAHEAAKLLGKPLEELKLITCHIGNGASITAVDKGVSVDTSMGFTPLGGVMMGTRTGDIDPAIIPYLMQHTDDFKTPEDISRILNRESGLLGVSEKSSDMRDIHEAMRAGDAKAQLANDIFVDRIQKYIGQYLAVLNGADAIIFTAGIGENSVTIRKLVIEGISWFGCDIDPEKNVYGQYGNISTPEAKVRVLVIPTDEELVIARDVERFKK</sequence>
<accession>A8AZH2</accession>
<dbReference type="EC" id="2.7.2.1" evidence="1"/>
<dbReference type="EMBL" id="CP000725">
    <property type="protein sequence ID" value="ABV10009.1"/>
    <property type="molecule type" value="Genomic_DNA"/>
</dbReference>
<dbReference type="RefSeq" id="WP_012130934.1">
    <property type="nucleotide sequence ID" value="NC_009785.1"/>
</dbReference>
<dbReference type="SMR" id="A8AZH2"/>
<dbReference type="STRING" id="467705.SGO_1916"/>
<dbReference type="KEGG" id="sgo:SGO_1916"/>
<dbReference type="eggNOG" id="COG0282">
    <property type="taxonomic scope" value="Bacteria"/>
</dbReference>
<dbReference type="HOGENOM" id="CLU_020352_0_1_9"/>
<dbReference type="UniPathway" id="UPA00340">
    <property type="reaction ID" value="UER00458"/>
</dbReference>
<dbReference type="Proteomes" id="UP000001131">
    <property type="component" value="Chromosome"/>
</dbReference>
<dbReference type="GO" id="GO:0005737">
    <property type="term" value="C:cytoplasm"/>
    <property type="evidence" value="ECO:0007669"/>
    <property type="project" value="UniProtKB-SubCell"/>
</dbReference>
<dbReference type="GO" id="GO:0008776">
    <property type="term" value="F:acetate kinase activity"/>
    <property type="evidence" value="ECO:0007669"/>
    <property type="project" value="UniProtKB-UniRule"/>
</dbReference>
<dbReference type="GO" id="GO:0005524">
    <property type="term" value="F:ATP binding"/>
    <property type="evidence" value="ECO:0007669"/>
    <property type="project" value="UniProtKB-KW"/>
</dbReference>
<dbReference type="GO" id="GO:0000287">
    <property type="term" value="F:magnesium ion binding"/>
    <property type="evidence" value="ECO:0007669"/>
    <property type="project" value="UniProtKB-UniRule"/>
</dbReference>
<dbReference type="GO" id="GO:0006083">
    <property type="term" value="P:acetate metabolic process"/>
    <property type="evidence" value="ECO:0007669"/>
    <property type="project" value="TreeGrafter"/>
</dbReference>
<dbReference type="GO" id="GO:0006085">
    <property type="term" value="P:acetyl-CoA biosynthetic process"/>
    <property type="evidence" value="ECO:0007669"/>
    <property type="project" value="UniProtKB-UniRule"/>
</dbReference>
<dbReference type="CDD" id="cd24010">
    <property type="entry name" value="ASKHA_NBD_AcK_PK"/>
    <property type="match status" value="1"/>
</dbReference>
<dbReference type="Gene3D" id="3.30.420.40">
    <property type="match status" value="2"/>
</dbReference>
<dbReference type="HAMAP" id="MF_00020">
    <property type="entry name" value="Acetate_kinase"/>
    <property type="match status" value="1"/>
</dbReference>
<dbReference type="InterPro" id="IPR004372">
    <property type="entry name" value="Ac/propionate_kinase"/>
</dbReference>
<dbReference type="InterPro" id="IPR000890">
    <property type="entry name" value="Aliphatic_acid_kin_short-chain"/>
</dbReference>
<dbReference type="InterPro" id="IPR023865">
    <property type="entry name" value="Aliphatic_acid_kinase_CS"/>
</dbReference>
<dbReference type="InterPro" id="IPR043129">
    <property type="entry name" value="ATPase_NBD"/>
</dbReference>
<dbReference type="NCBIfam" id="TIGR00016">
    <property type="entry name" value="ackA"/>
    <property type="match status" value="1"/>
</dbReference>
<dbReference type="PANTHER" id="PTHR21060">
    <property type="entry name" value="ACETATE KINASE"/>
    <property type="match status" value="1"/>
</dbReference>
<dbReference type="PANTHER" id="PTHR21060:SF15">
    <property type="entry name" value="ACETATE KINASE-RELATED"/>
    <property type="match status" value="1"/>
</dbReference>
<dbReference type="Pfam" id="PF00871">
    <property type="entry name" value="Acetate_kinase"/>
    <property type="match status" value="1"/>
</dbReference>
<dbReference type="PIRSF" id="PIRSF000722">
    <property type="entry name" value="Acetate_prop_kin"/>
    <property type="match status" value="1"/>
</dbReference>
<dbReference type="PRINTS" id="PR00471">
    <property type="entry name" value="ACETATEKNASE"/>
</dbReference>
<dbReference type="SUPFAM" id="SSF53067">
    <property type="entry name" value="Actin-like ATPase domain"/>
    <property type="match status" value="2"/>
</dbReference>
<dbReference type="PROSITE" id="PS01075">
    <property type="entry name" value="ACETATE_KINASE_1"/>
    <property type="match status" value="1"/>
</dbReference>
<dbReference type="PROSITE" id="PS01076">
    <property type="entry name" value="ACETATE_KINASE_2"/>
    <property type="match status" value="1"/>
</dbReference>
<organism>
    <name type="scientific">Streptococcus gordonii (strain Challis / ATCC 35105 / BCRC 15272 / CH1 / DL1 / V288)</name>
    <dbReference type="NCBI Taxonomy" id="467705"/>
    <lineage>
        <taxon>Bacteria</taxon>
        <taxon>Bacillati</taxon>
        <taxon>Bacillota</taxon>
        <taxon>Bacilli</taxon>
        <taxon>Lactobacillales</taxon>
        <taxon>Streptococcaceae</taxon>
        <taxon>Streptococcus</taxon>
    </lineage>
</organism>